<keyword id="KW-0067">ATP-binding</keyword>
<keyword id="KW-0997">Cell inner membrane</keyword>
<keyword id="KW-1003">Cell membrane</keyword>
<keyword id="KW-0472">Membrane</keyword>
<keyword id="KW-0547">Nucleotide-binding</keyword>
<keyword id="KW-1185">Reference proteome</keyword>
<keyword id="KW-0762">Sugar transport</keyword>
<keyword id="KW-1278">Translocase</keyword>
<keyword id="KW-0813">Transport</keyword>
<name>UGPC_CUPMC</name>
<organism>
    <name type="scientific">Cupriavidus metallidurans (strain ATCC 43123 / DSM 2839 / NBRC 102507 / CH34)</name>
    <name type="common">Ralstonia metallidurans</name>
    <dbReference type="NCBI Taxonomy" id="266264"/>
    <lineage>
        <taxon>Bacteria</taxon>
        <taxon>Pseudomonadati</taxon>
        <taxon>Pseudomonadota</taxon>
        <taxon>Betaproteobacteria</taxon>
        <taxon>Burkholderiales</taxon>
        <taxon>Burkholderiaceae</taxon>
        <taxon>Cupriavidus</taxon>
    </lineage>
</organism>
<gene>
    <name evidence="1" type="primary">ugpC</name>
    <name type="ordered locus">Rmet_2052</name>
</gene>
<feature type="chain" id="PRO_0000289760" description="sn-glycerol-3-phosphate import ATP-binding protein UgpC">
    <location>
        <begin position="1"/>
        <end position="367"/>
    </location>
</feature>
<feature type="domain" description="ABC transporter" evidence="1">
    <location>
        <begin position="4"/>
        <end position="235"/>
    </location>
</feature>
<feature type="binding site" evidence="1">
    <location>
        <begin position="37"/>
        <end position="44"/>
    </location>
    <ligand>
        <name>ATP</name>
        <dbReference type="ChEBI" id="CHEBI:30616"/>
    </ligand>
</feature>
<dbReference type="EC" id="7.6.2.10" evidence="1"/>
<dbReference type="EMBL" id="CP000352">
    <property type="protein sequence ID" value="ABF08931.1"/>
    <property type="molecule type" value="Genomic_DNA"/>
</dbReference>
<dbReference type="RefSeq" id="WP_011516763.1">
    <property type="nucleotide sequence ID" value="NC_007973.1"/>
</dbReference>
<dbReference type="SMR" id="Q1LLP5"/>
<dbReference type="STRING" id="266264.Rmet_2052"/>
<dbReference type="KEGG" id="rme:Rmet_2052"/>
<dbReference type="eggNOG" id="COG3842">
    <property type="taxonomic scope" value="Bacteria"/>
</dbReference>
<dbReference type="HOGENOM" id="CLU_000604_1_1_4"/>
<dbReference type="Proteomes" id="UP000002429">
    <property type="component" value="Chromosome"/>
</dbReference>
<dbReference type="GO" id="GO:0055052">
    <property type="term" value="C:ATP-binding cassette (ABC) transporter complex, substrate-binding subunit-containing"/>
    <property type="evidence" value="ECO:0007669"/>
    <property type="project" value="TreeGrafter"/>
</dbReference>
<dbReference type="GO" id="GO:0015430">
    <property type="term" value="F:ABC-type glycerol-3-phosphate transporter activity"/>
    <property type="evidence" value="ECO:0007669"/>
    <property type="project" value="UniProtKB-EC"/>
</dbReference>
<dbReference type="GO" id="GO:0005524">
    <property type="term" value="F:ATP binding"/>
    <property type="evidence" value="ECO:0007669"/>
    <property type="project" value="UniProtKB-KW"/>
</dbReference>
<dbReference type="GO" id="GO:0016887">
    <property type="term" value="F:ATP hydrolysis activity"/>
    <property type="evidence" value="ECO:0007669"/>
    <property type="project" value="InterPro"/>
</dbReference>
<dbReference type="GO" id="GO:0008643">
    <property type="term" value="P:carbohydrate transport"/>
    <property type="evidence" value="ECO:0007669"/>
    <property type="project" value="InterPro"/>
</dbReference>
<dbReference type="GO" id="GO:0001407">
    <property type="term" value="P:glycerophosphodiester transmembrane transport"/>
    <property type="evidence" value="ECO:0007669"/>
    <property type="project" value="TreeGrafter"/>
</dbReference>
<dbReference type="CDD" id="cd03301">
    <property type="entry name" value="ABC_MalK_N"/>
    <property type="match status" value="1"/>
</dbReference>
<dbReference type="FunFam" id="3.40.50.300:FF:000042">
    <property type="entry name" value="Maltose/maltodextrin ABC transporter, ATP-binding protein"/>
    <property type="match status" value="1"/>
</dbReference>
<dbReference type="Gene3D" id="2.40.50.100">
    <property type="match status" value="1"/>
</dbReference>
<dbReference type="Gene3D" id="2.40.50.140">
    <property type="entry name" value="Nucleic acid-binding proteins"/>
    <property type="match status" value="1"/>
</dbReference>
<dbReference type="Gene3D" id="3.40.50.300">
    <property type="entry name" value="P-loop containing nucleotide triphosphate hydrolases"/>
    <property type="match status" value="1"/>
</dbReference>
<dbReference type="InterPro" id="IPR003593">
    <property type="entry name" value="AAA+_ATPase"/>
</dbReference>
<dbReference type="InterPro" id="IPR003439">
    <property type="entry name" value="ABC_transporter-like_ATP-bd"/>
</dbReference>
<dbReference type="InterPro" id="IPR017871">
    <property type="entry name" value="ABC_transporter-like_CS"/>
</dbReference>
<dbReference type="InterPro" id="IPR015855">
    <property type="entry name" value="ABC_transpr_MalK-like"/>
</dbReference>
<dbReference type="InterPro" id="IPR047641">
    <property type="entry name" value="ABC_transpr_MalK/UgpC-like"/>
</dbReference>
<dbReference type="InterPro" id="IPR008995">
    <property type="entry name" value="Mo/tungstate-bd_C_term_dom"/>
</dbReference>
<dbReference type="InterPro" id="IPR012340">
    <property type="entry name" value="NA-bd_OB-fold"/>
</dbReference>
<dbReference type="InterPro" id="IPR027417">
    <property type="entry name" value="P-loop_NTPase"/>
</dbReference>
<dbReference type="InterPro" id="IPR013611">
    <property type="entry name" value="Transp-assoc_OB_typ2"/>
</dbReference>
<dbReference type="NCBIfam" id="NF008653">
    <property type="entry name" value="PRK11650.1"/>
    <property type="match status" value="1"/>
</dbReference>
<dbReference type="PANTHER" id="PTHR43875">
    <property type="entry name" value="MALTODEXTRIN IMPORT ATP-BINDING PROTEIN MSMX"/>
    <property type="match status" value="1"/>
</dbReference>
<dbReference type="PANTHER" id="PTHR43875:SF12">
    <property type="entry name" value="SN-GLYCEROL-3-PHOSPHATE IMPORT ATP-BINDING PROTEIN UGPC"/>
    <property type="match status" value="1"/>
</dbReference>
<dbReference type="Pfam" id="PF00005">
    <property type="entry name" value="ABC_tran"/>
    <property type="match status" value="1"/>
</dbReference>
<dbReference type="Pfam" id="PF08402">
    <property type="entry name" value="TOBE_2"/>
    <property type="match status" value="1"/>
</dbReference>
<dbReference type="SMART" id="SM00382">
    <property type="entry name" value="AAA"/>
    <property type="match status" value="1"/>
</dbReference>
<dbReference type="SUPFAM" id="SSF50331">
    <property type="entry name" value="MOP-like"/>
    <property type="match status" value="1"/>
</dbReference>
<dbReference type="SUPFAM" id="SSF52540">
    <property type="entry name" value="P-loop containing nucleoside triphosphate hydrolases"/>
    <property type="match status" value="1"/>
</dbReference>
<dbReference type="PROSITE" id="PS00211">
    <property type="entry name" value="ABC_TRANSPORTER_1"/>
    <property type="match status" value="1"/>
</dbReference>
<dbReference type="PROSITE" id="PS50893">
    <property type="entry name" value="ABC_TRANSPORTER_2"/>
    <property type="match status" value="1"/>
</dbReference>
<dbReference type="PROSITE" id="PS51315">
    <property type="entry name" value="UGPC"/>
    <property type="match status" value="1"/>
</dbReference>
<sequence>MAKLSLRNVQKTYAGGTQVVHGIDMEIADGEFIVIVGPSGCGKSTLLRMVAGLETITGGEIHIGDKVVNDLEPAARDIAMVFQNYALYPHMSVYDNMAYGLKIRGMSKGEIEQRVKHAAGILELASLLDRKPRALSGGQRQRVAMGRAIVREPSVFLFDEPLSNLDAKLRVQMRLELKDLHRRLKTTSLYVTHDQVEAMTLADRMMVLNGGRVEQIGTPLEVYARPASTFVAGFIGSPPMNLVPVARNGSGQGVAQMRVQPKDGQAAATLGHLPMGLHLPEQALMGLRPEHIEPCAVHEAIAELDVRVVEALGADSFAYGSLGGQPIVVRLDSQTQVRAGDKLPITASAEHLHFFDVQSGKRIEAQA</sequence>
<comment type="function">
    <text evidence="1">Part of the ABC transporter complex UgpBAEC involved in sn-glycerol-3-phosphate (G3P) import. Responsible for energy coupling to the transport system.</text>
</comment>
<comment type="catalytic activity">
    <reaction evidence="1">
        <text>sn-glycerol 3-phosphate(out) + ATP + H2O = sn-glycerol 3-phosphate(in) + ADP + phosphate + H(+)</text>
        <dbReference type="Rhea" id="RHEA:21668"/>
        <dbReference type="ChEBI" id="CHEBI:15377"/>
        <dbReference type="ChEBI" id="CHEBI:15378"/>
        <dbReference type="ChEBI" id="CHEBI:30616"/>
        <dbReference type="ChEBI" id="CHEBI:43474"/>
        <dbReference type="ChEBI" id="CHEBI:57597"/>
        <dbReference type="ChEBI" id="CHEBI:456216"/>
        <dbReference type="EC" id="7.6.2.10"/>
    </reaction>
</comment>
<comment type="subunit">
    <text evidence="1">The complex is composed of two ATP-binding proteins (UgpC), two transmembrane proteins (UgpA and UgpE) and a solute-binding protein (UgpB).</text>
</comment>
<comment type="subcellular location">
    <subcellularLocation>
        <location evidence="1">Cell inner membrane</location>
        <topology evidence="1">Peripheral membrane protein</topology>
    </subcellularLocation>
</comment>
<comment type="similarity">
    <text evidence="1">Belongs to the ABC transporter superfamily. sn-glycerol-3-phosphate importer (TC 3.A.1.1.3) family.</text>
</comment>
<reference key="1">
    <citation type="journal article" date="2010" name="PLoS ONE">
        <title>The complete genome sequence of Cupriavidus metallidurans strain CH34, a master survivalist in harsh and anthropogenic environments.</title>
        <authorList>
            <person name="Janssen P.J."/>
            <person name="Van Houdt R."/>
            <person name="Moors H."/>
            <person name="Monsieurs P."/>
            <person name="Morin N."/>
            <person name="Michaux A."/>
            <person name="Benotmane M.A."/>
            <person name="Leys N."/>
            <person name="Vallaeys T."/>
            <person name="Lapidus A."/>
            <person name="Monchy S."/>
            <person name="Medigue C."/>
            <person name="Taghavi S."/>
            <person name="McCorkle S."/>
            <person name="Dunn J."/>
            <person name="van der Lelie D."/>
            <person name="Mergeay M."/>
        </authorList>
    </citation>
    <scope>NUCLEOTIDE SEQUENCE [LARGE SCALE GENOMIC DNA]</scope>
    <source>
        <strain>ATCC 43123 / DSM 2839 / NBRC 102507 / CH34</strain>
    </source>
</reference>
<accession>Q1LLP5</accession>
<protein>
    <recommendedName>
        <fullName evidence="1">sn-glycerol-3-phosphate import ATP-binding protein UgpC</fullName>
        <ecNumber evidence="1">7.6.2.10</ecNumber>
    </recommendedName>
</protein>
<evidence type="ECO:0000255" key="1">
    <source>
        <dbReference type="HAMAP-Rule" id="MF_01727"/>
    </source>
</evidence>
<proteinExistence type="inferred from homology"/>